<reference key="1">
    <citation type="journal article" date="2009" name="PLoS Genet.">
        <title>Organised genome dynamics in the Escherichia coli species results in highly diverse adaptive paths.</title>
        <authorList>
            <person name="Touchon M."/>
            <person name="Hoede C."/>
            <person name="Tenaillon O."/>
            <person name="Barbe V."/>
            <person name="Baeriswyl S."/>
            <person name="Bidet P."/>
            <person name="Bingen E."/>
            <person name="Bonacorsi S."/>
            <person name="Bouchier C."/>
            <person name="Bouvet O."/>
            <person name="Calteau A."/>
            <person name="Chiapello H."/>
            <person name="Clermont O."/>
            <person name="Cruveiller S."/>
            <person name="Danchin A."/>
            <person name="Diard M."/>
            <person name="Dossat C."/>
            <person name="Karoui M.E."/>
            <person name="Frapy E."/>
            <person name="Garry L."/>
            <person name="Ghigo J.M."/>
            <person name="Gilles A.M."/>
            <person name="Johnson J."/>
            <person name="Le Bouguenec C."/>
            <person name="Lescat M."/>
            <person name="Mangenot S."/>
            <person name="Martinez-Jehanne V."/>
            <person name="Matic I."/>
            <person name="Nassif X."/>
            <person name="Oztas S."/>
            <person name="Petit M.A."/>
            <person name="Pichon C."/>
            <person name="Rouy Z."/>
            <person name="Ruf C.S."/>
            <person name="Schneider D."/>
            <person name="Tourret J."/>
            <person name="Vacherie B."/>
            <person name="Vallenet D."/>
            <person name="Medigue C."/>
            <person name="Rocha E.P.C."/>
            <person name="Denamur E."/>
        </authorList>
    </citation>
    <scope>NUCLEOTIDE SEQUENCE [LARGE SCALE GENOMIC DNA]</scope>
    <source>
        <strain>IAI1</strain>
    </source>
</reference>
<dbReference type="EC" id="3.5.1.108" evidence="1"/>
<dbReference type="EMBL" id="CU928160">
    <property type="protein sequence ID" value="CAQ96985.1"/>
    <property type="molecule type" value="Genomic_DNA"/>
</dbReference>
<dbReference type="RefSeq" id="WP_000595482.1">
    <property type="nucleotide sequence ID" value="NC_011741.1"/>
</dbReference>
<dbReference type="SMR" id="B7M139"/>
<dbReference type="GeneID" id="93777338"/>
<dbReference type="KEGG" id="ecr:ECIAI1_0096"/>
<dbReference type="HOGENOM" id="CLU_046528_1_0_6"/>
<dbReference type="UniPathway" id="UPA00359">
    <property type="reaction ID" value="UER00478"/>
</dbReference>
<dbReference type="GO" id="GO:0016020">
    <property type="term" value="C:membrane"/>
    <property type="evidence" value="ECO:0007669"/>
    <property type="project" value="GOC"/>
</dbReference>
<dbReference type="GO" id="GO:0046872">
    <property type="term" value="F:metal ion binding"/>
    <property type="evidence" value="ECO:0007669"/>
    <property type="project" value="UniProtKB-KW"/>
</dbReference>
<dbReference type="GO" id="GO:0103117">
    <property type="term" value="F:UDP-3-O-acyl-N-acetylglucosamine deacetylase activity"/>
    <property type="evidence" value="ECO:0007669"/>
    <property type="project" value="UniProtKB-UniRule"/>
</dbReference>
<dbReference type="GO" id="GO:0009245">
    <property type="term" value="P:lipid A biosynthetic process"/>
    <property type="evidence" value="ECO:0007669"/>
    <property type="project" value="UniProtKB-UniRule"/>
</dbReference>
<dbReference type="FunFam" id="3.30.1700.10:FF:000001">
    <property type="entry name" value="UDP-3-O-acyl-N-acetylglucosamine deacetylase"/>
    <property type="match status" value="1"/>
</dbReference>
<dbReference type="FunFam" id="3.30.230.20:FF:000001">
    <property type="entry name" value="UDP-3-O-acyl-N-acetylglucosamine deacetylase"/>
    <property type="match status" value="1"/>
</dbReference>
<dbReference type="Gene3D" id="3.30.230.20">
    <property type="entry name" value="lpxc deacetylase, domain 1"/>
    <property type="match status" value="1"/>
</dbReference>
<dbReference type="Gene3D" id="3.30.1700.10">
    <property type="entry name" value="lpxc deacetylase, domain 2"/>
    <property type="match status" value="1"/>
</dbReference>
<dbReference type="HAMAP" id="MF_00388">
    <property type="entry name" value="LpxC"/>
    <property type="match status" value="1"/>
</dbReference>
<dbReference type="InterPro" id="IPR020568">
    <property type="entry name" value="Ribosomal_Su5_D2-typ_SF"/>
</dbReference>
<dbReference type="InterPro" id="IPR004463">
    <property type="entry name" value="UDP-acyl_GlcNac_deAcase"/>
</dbReference>
<dbReference type="InterPro" id="IPR011334">
    <property type="entry name" value="UDP-acyl_GlcNac_deAcase_C"/>
</dbReference>
<dbReference type="InterPro" id="IPR015870">
    <property type="entry name" value="UDP-acyl_N-AcGlcN_deAcase_N"/>
</dbReference>
<dbReference type="NCBIfam" id="TIGR00325">
    <property type="entry name" value="lpxC"/>
    <property type="match status" value="1"/>
</dbReference>
<dbReference type="PANTHER" id="PTHR33694">
    <property type="entry name" value="UDP-3-O-ACYL-N-ACETYLGLUCOSAMINE DEACETYLASE 1, MITOCHONDRIAL-RELATED"/>
    <property type="match status" value="1"/>
</dbReference>
<dbReference type="PANTHER" id="PTHR33694:SF1">
    <property type="entry name" value="UDP-3-O-ACYL-N-ACETYLGLUCOSAMINE DEACETYLASE 1, MITOCHONDRIAL-RELATED"/>
    <property type="match status" value="1"/>
</dbReference>
<dbReference type="Pfam" id="PF03331">
    <property type="entry name" value="LpxC"/>
    <property type="match status" value="1"/>
</dbReference>
<dbReference type="SUPFAM" id="SSF54211">
    <property type="entry name" value="Ribosomal protein S5 domain 2-like"/>
    <property type="match status" value="2"/>
</dbReference>
<proteinExistence type="inferred from homology"/>
<accession>B7M139</accession>
<evidence type="ECO:0000255" key="1">
    <source>
        <dbReference type="HAMAP-Rule" id="MF_00388"/>
    </source>
</evidence>
<name>LPXC_ECO8A</name>
<protein>
    <recommendedName>
        <fullName evidence="1">UDP-3-O-acyl-N-acetylglucosamine deacetylase</fullName>
        <shortName evidence="1">UDP-3-O-acyl-GlcNAc deacetylase</shortName>
        <ecNumber evidence="1">3.5.1.108</ecNumber>
    </recommendedName>
    <alternativeName>
        <fullName evidence="1">UDP-3-O-[R-3-hydroxymyristoyl]-N-acetylglucosamine deacetylase</fullName>
    </alternativeName>
</protein>
<gene>
    <name evidence="1" type="primary">lpxC</name>
    <name type="ordered locus">ECIAI1_0096</name>
</gene>
<comment type="function">
    <text evidence="1">Catalyzes the hydrolysis of UDP-3-O-myristoyl-N-acetylglucosamine to form UDP-3-O-myristoylglucosamine and acetate, the committed step in lipid A biosynthesis.</text>
</comment>
<comment type="catalytic activity">
    <reaction evidence="1">
        <text>a UDP-3-O-[(3R)-3-hydroxyacyl]-N-acetyl-alpha-D-glucosamine + H2O = a UDP-3-O-[(3R)-3-hydroxyacyl]-alpha-D-glucosamine + acetate</text>
        <dbReference type="Rhea" id="RHEA:67816"/>
        <dbReference type="ChEBI" id="CHEBI:15377"/>
        <dbReference type="ChEBI" id="CHEBI:30089"/>
        <dbReference type="ChEBI" id="CHEBI:137740"/>
        <dbReference type="ChEBI" id="CHEBI:173225"/>
        <dbReference type="EC" id="3.5.1.108"/>
    </reaction>
</comment>
<comment type="cofactor">
    <cofactor evidence="1">
        <name>Zn(2+)</name>
        <dbReference type="ChEBI" id="CHEBI:29105"/>
    </cofactor>
</comment>
<comment type="pathway">
    <text evidence="1">Glycolipid biosynthesis; lipid IV(A) biosynthesis; lipid IV(A) from (3R)-3-hydroxytetradecanoyl-[acyl-carrier-protein] and UDP-N-acetyl-alpha-D-glucosamine: step 2/6.</text>
</comment>
<comment type="similarity">
    <text evidence="1">Belongs to the LpxC family.</text>
</comment>
<sequence length="305" mass="33956">MIKQRTLKRIVQATGVGLHTGKKVTLTLRPAPANTGVIYRRTDLNPPVDFPADAKSVRDTMLCTCLVNEHDVRISTVEHLNAALAGLGIDNIVIEVNAPEIPIMDGSAAPFVYLLLDAGIDELNCAKKFVRIKETVRVEDGDKWAEFKPYNGFSLDFTIDFNHPAIDSSNQRYAMNFSADAFMRQISRARTFGFMRDIEYLQSRGLCLGGSFDCAIVVDDYRVLNEDGLRFEDEFVRHKMLDAIGDLFMCGHNIIGAFTAYKSGHALNNKLLQAVLAKQEAWEYVTFQDDAELPLAFKAPSAVLA</sequence>
<keyword id="KW-0378">Hydrolase</keyword>
<keyword id="KW-0441">Lipid A biosynthesis</keyword>
<keyword id="KW-0444">Lipid biosynthesis</keyword>
<keyword id="KW-0443">Lipid metabolism</keyword>
<keyword id="KW-0479">Metal-binding</keyword>
<keyword id="KW-0862">Zinc</keyword>
<feature type="chain" id="PRO_1000122782" description="UDP-3-O-acyl-N-acetylglucosamine deacetylase">
    <location>
        <begin position="1"/>
        <end position="305"/>
    </location>
</feature>
<feature type="active site" description="Proton donor" evidence="1">
    <location>
        <position position="265"/>
    </location>
</feature>
<feature type="binding site" evidence="1">
    <location>
        <position position="79"/>
    </location>
    <ligand>
        <name>Zn(2+)</name>
        <dbReference type="ChEBI" id="CHEBI:29105"/>
    </ligand>
</feature>
<feature type="binding site" evidence="1">
    <location>
        <position position="238"/>
    </location>
    <ligand>
        <name>Zn(2+)</name>
        <dbReference type="ChEBI" id="CHEBI:29105"/>
    </ligand>
</feature>
<feature type="binding site" evidence="1">
    <location>
        <position position="242"/>
    </location>
    <ligand>
        <name>Zn(2+)</name>
        <dbReference type="ChEBI" id="CHEBI:29105"/>
    </ligand>
</feature>
<organism>
    <name type="scientific">Escherichia coli O8 (strain IAI1)</name>
    <dbReference type="NCBI Taxonomy" id="585034"/>
    <lineage>
        <taxon>Bacteria</taxon>
        <taxon>Pseudomonadati</taxon>
        <taxon>Pseudomonadota</taxon>
        <taxon>Gammaproteobacteria</taxon>
        <taxon>Enterobacterales</taxon>
        <taxon>Enterobacteriaceae</taxon>
        <taxon>Escherichia</taxon>
    </lineage>
</organism>